<organism>
    <name type="scientific">Phaseolus vulgaris</name>
    <name type="common">Kidney bean</name>
    <name type="synonym">French bean</name>
    <dbReference type="NCBI Taxonomy" id="3885"/>
    <lineage>
        <taxon>Eukaryota</taxon>
        <taxon>Viridiplantae</taxon>
        <taxon>Streptophyta</taxon>
        <taxon>Embryophyta</taxon>
        <taxon>Tracheophyta</taxon>
        <taxon>Spermatophyta</taxon>
        <taxon>Magnoliopsida</taxon>
        <taxon>eudicotyledons</taxon>
        <taxon>Gunneridae</taxon>
        <taxon>Pentapetalae</taxon>
        <taxon>rosids</taxon>
        <taxon>fabids</taxon>
        <taxon>Fabales</taxon>
        <taxon>Fabaceae</taxon>
        <taxon>Papilionoideae</taxon>
        <taxon>50 kb inversion clade</taxon>
        <taxon>NPAAA clade</taxon>
        <taxon>indigoferoid/millettioid clade</taxon>
        <taxon>Phaseoleae</taxon>
        <taxon>Phaseolus</taxon>
    </lineage>
</organism>
<name>YCF4_PHAVU</name>
<keyword id="KW-0150">Chloroplast</keyword>
<keyword id="KW-0472">Membrane</keyword>
<keyword id="KW-0602">Photosynthesis</keyword>
<keyword id="KW-0934">Plastid</keyword>
<keyword id="KW-0793">Thylakoid</keyword>
<keyword id="KW-0812">Transmembrane</keyword>
<keyword id="KW-1133">Transmembrane helix</keyword>
<sequence length="194" mass="22053">MSILKKRSKEVLIYSITESKISNIFSALIIFLGSLGLLLVAISSYLGMDLFLFSEEISNFPFIPQGATMAFYGIGGLFISFYLWWILLWNIGGGFDIFDKKNKKVCFIRWGFPGKNRRIILKIPMNEIQSIRIIAGVQERGILTRTLTYESIVYMETIEQGFITLTRIEDNLTPPEIANKAGELAFFLGVPLLY</sequence>
<evidence type="ECO:0000250" key="1"/>
<evidence type="ECO:0000255" key="2"/>
<evidence type="ECO:0000305" key="3"/>
<accession>A4GGB7</accession>
<comment type="function">
    <text evidence="1">Seems to be required for the assembly of the photosystem I complex.</text>
</comment>
<comment type="subcellular location">
    <subcellularLocation>
        <location evidence="1">Plastid</location>
        <location evidence="1">Chloroplast thylakoid membrane</location>
        <topology evidence="1">Multi-pass membrane protein</topology>
    </subcellularLocation>
</comment>
<comment type="similarity">
    <text evidence="3">Belongs to the Ycf4 family.</text>
</comment>
<reference key="1">
    <citation type="journal article" date="2007" name="BMC Genomics">
        <title>Rapid evolutionary change of common bean (Phaseolus vulgaris L) plastome, and the genomic diversification of legume chloroplasts.</title>
        <authorList>
            <person name="Guo X."/>
            <person name="Castillo-Ramirez S."/>
            <person name="Gonzalez V."/>
            <person name="Bustos P."/>
            <person name="Fernandez-Vazquez J.L."/>
            <person name="Santamaria R.I."/>
            <person name="Arellano J."/>
            <person name="Cevallos M.A."/>
            <person name="Davila G."/>
        </authorList>
    </citation>
    <scope>NUCLEOTIDE SEQUENCE [LARGE SCALE GENOMIC DNA]</scope>
    <source>
        <strain>cv. Negro Jamapa</strain>
    </source>
</reference>
<reference key="2">
    <citation type="submission" date="2007-10" db="EMBL/GenBank/DDBJ databases">
        <title>Complete nucleotide sequence of the plastid genome of the common bean, Phaseolus vulgaris.</title>
        <authorList>
            <person name="Moore M.J."/>
            <person name="Triplett E.W."/>
            <person name="Broughton W.J."/>
            <person name="Soltis P.S."/>
            <person name="Soltis D.E."/>
        </authorList>
    </citation>
    <scope>NUCLEOTIDE SEQUENCE [LARGE SCALE GENOMIC DNA]</scope>
</reference>
<geneLocation type="chloroplast"/>
<proteinExistence type="inferred from homology"/>
<gene>
    <name type="primary">ycf4</name>
</gene>
<dbReference type="EMBL" id="DQ886273">
    <property type="protein sequence ID" value="ABH88098.1"/>
    <property type="molecule type" value="Genomic_DNA"/>
</dbReference>
<dbReference type="EMBL" id="EU196765">
    <property type="status" value="NOT_ANNOTATED_CDS"/>
    <property type="molecule type" value="Genomic_DNA"/>
</dbReference>
<dbReference type="RefSeq" id="YP_001122818.1">
    <property type="nucleotide sequence ID" value="NC_009259.1"/>
</dbReference>
<dbReference type="GeneID" id="4961810"/>
<dbReference type="KEGG" id="pvu:4961810"/>
<dbReference type="GO" id="GO:0009535">
    <property type="term" value="C:chloroplast thylakoid membrane"/>
    <property type="evidence" value="ECO:0007669"/>
    <property type="project" value="UniProtKB-SubCell"/>
</dbReference>
<dbReference type="GO" id="GO:0009522">
    <property type="term" value="C:photosystem I"/>
    <property type="evidence" value="ECO:0007669"/>
    <property type="project" value="InterPro"/>
</dbReference>
<dbReference type="GO" id="GO:0015979">
    <property type="term" value="P:photosynthesis"/>
    <property type="evidence" value="ECO:0007669"/>
    <property type="project" value="UniProtKB-KW"/>
</dbReference>
<dbReference type="InterPro" id="IPR003359">
    <property type="entry name" value="PSI_Ycf4_assembly"/>
</dbReference>
<dbReference type="PANTHER" id="PTHR33288">
    <property type="match status" value="1"/>
</dbReference>
<dbReference type="PANTHER" id="PTHR33288:SF4">
    <property type="entry name" value="PHOTOSYSTEM I ASSEMBLY PROTEIN YCF4"/>
    <property type="match status" value="1"/>
</dbReference>
<dbReference type="Pfam" id="PF02392">
    <property type="entry name" value="Ycf4"/>
    <property type="match status" value="1"/>
</dbReference>
<protein>
    <recommendedName>
        <fullName>Photosystem I assembly protein Ycf4</fullName>
    </recommendedName>
</protein>
<feature type="chain" id="PRO_0000326021" description="Photosystem I assembly protein Ycf4">
    <location>
        <begin position="1"/>
        <end position="194"/>
    </location>
</feature>
<feature type="transmembrane region" description="Helical" evidence="2">
    <location>
        <begin position="24"/>
        <end position="44"/>
    </location>
</feature>
<feature type="transmembrane region" description="Helical" evidence="2">
    <location>
        <begin position="69"/>
        <end position="89"/>
    </location>
</feature>